<feature type="chain" id="PRO_0000186992" description="Uncharacterized protein aq_aa21">
    <location>
        <begin position="1"/>
        <end position="213"/>
    </location>
</feature>
<sequence>MKELTLLKKIKGGKEMNEYYERMEELFKREFAKEYLELAEQYYGIEESYYEEEQKLDEEEREITDWTGQIDEVYSNITIDEDWLFEKLIKRIELGGKVYTLFVEPYNSLLHRKPIVVVLKPLKGSKKLEEIVAKAYYSRFYWMEDPFYRDILLSRAYEAENTIKEDPEKFEEFVKMAEVLKEHEDRFLNIENIGIKFVEKNLSEFTLGFDLEE</sequence>
<proteinExistence type="predicted"/>
<protein>
    <recommendedName>
        <fullName>Uncharacterized protein aq_aa21</fullName>
    </recommendedName>
</protein>
<accession>O66412</accession>
<gene>
    <name type="ordered locus">aq_aa21</name>
</gene>
<organism>
    <name type="scientific">Aquifex aeolicus (strain VF5)</name>
    <dbReference type="NCBI Taxonomy" id="224324"/>
    <lineage>
        <taxon>Bacteria</taxon>
        <taxon>Pseudomonadati</taxon>
        <taxon>Aquificota</taxon>
        <taxon>Aquificia</taxon>
        <taxon>Aquificales</taxon>
        <taxon>Aquificaceae</taxon>
        <taxon>Aquifex</taxon>
    </lineage>
</organism>
<geneLocation type="plasmid">
    <name>ece1</name>
</geneLocation>
<name>YZ21_AQUAE</name>
<dbReference type="EMBL" id="AE000667">
    <property type="protein sequence ID" value="AAC07964.1"/>
    <property type="molecule type" value="Genomic_DNA"/>
</dbReference>
<dbReference type="RefSeq" id="NP_046412.1">
    <property type="nucleotide sequence ID" value="NC_001880.1"/>
</dbReference>
<dbReference type="RefSeq" id="WP_010890558.1">
    <property type="nucleotide sequence ID" value="NC_001880.1"/>
</dbReference>
<dbReference type="EnsemblBacteria" id="AAC07964">
    <property type="protein sequence ID" value="AAC07964"/>
    <property type="gene ID" value="aq_aa21"/>
</dbReference>
<dbReference type="KEGG" id="aae:aq_aa21"/>
<dbReference type="HOGENOM" id="CLU_1292230_0_0_0"/>
<dbReference type="InParanoid" id="O66412"/>
<dbReference type="Proteomes" id="UP000000798">
    <property type="component" value="Plasmid ece1"/>
</dbReference>
<reference key="1">
    <citation type="journal article" date="1998" name="Nature">
        <title>The complete genome of the hyperthermophilic bacterium Aquifex aeolicus.</title>
        <authorList>
            <person name="Deckert G."/>
            <person name="Warren P.V."/>
            <person name="Gaasterland T."/>
            <person name="Young W.G."/>
            <person name="Lenox A.L."/>
            <person name="Graham D.E."/>
            <person name="Overbeek R."/>
            <person name="Snead M.A."/>
            <person name="Keller M."/>
            <person name="Aujay M."/>
            <person name="Huber R."/>
            <person name="Feldman R.A."/>
            <person name="Short J.M."/>
            <person name="Olsen G.J."/>
            <person name="Swanson R.V."/>
        </authorList>
    </citation>
    <scope>NUCLEOTIDE SEQUENCE [LARGE SCALE GENOMIC DNA]</scope>
    <source>
        <strain>VF5</strain>
    </source>
</reference>
<keyword id="KW-0614">Plasmid</keyword>
<keyword id="KW-1185">Reference proteome</keyword>